<gene>
    <name type="primary">bglP</name>
    <name type="ordered locus">BSU39270</name>
    <name type="ORF">N17C</name>
</gene>
<accession>P40739</accession>
<accession>Q45661</accession>
<feature type="chain" id="PRO_0000186480" description="PTS system beta-glucoside-specific EIIBCA component">
    <location>
        <begin position="1"/>
        <end position="609"/>
    </location>
</feature>
<feature type="transmembrane region" description="Helical" evidence="4">
    <location>
        <begin position="112"/>
        <end position="132"/>
    </location>
</feature>
<feature type="transmembrane region" description="Helical" evidence="4">
    <location>
        <begin position="141"/>
        <end position="161"/>
    </location>
</feature>
<feature type="transmembrane region" description="Helical" evidence="4">
    <location>
        <begin position="174"/>
        <end position="194"/>
    </location>
</feature>
<feature type="transmembrane region" description="Helical" evidence="4">
    <location>
        <begin position="202"/>
        <end position="222"/>
    </location>
</feature>
<feature type="transmembrane region" description="Helical" evidence="4">
    <location>
        <begin position="246"/>
        <end position="266"/>
    </location>
</feature>
<feature type="transmembrane region" description="Helical" evidence="4">
    <location>
        <begin position="281"/>
        <end position="301"/>
    </location>
</feature>
<feature type="transmembrane region" description="Helical" evidence="4">
    <location>
        <begin position="321"/>
        <end position="341"/>
    </location>
</feature>
<feature type="transmembrane region" description="Helical" evidence="4">
    <location>
        <begin position="351"/>
        <end position="371"/>
    </location>
</feature>
<feature type="transmembrane region" description="Helical" evidence="4">
    <location>
        <begin position="379"/>
        <end position="399"/>
    </location>
</feature>
<feature type="transmembrane region" description="Helical" evidence="4">
    <location>
        <begin position="412"/>
        <end position="432"/>
    </location>
</feature>
<feature type="domain" description="PTS EIIB type-1" evidence="3">
    <location>
        <begin position="1"/>
        <end position="86"/>
    </location>
</feature>
<feature type="domain" description="PTS EIIC type-1" evidence="4">
    <location>
        <begin position="103"/>
        <end position="459"/>
    </location>
</feature>
<feature type="domain" description="PTS EIIA type-1" evidence="2">
    <location>
        <begin position="480"/>
        <end position="584"/>
    </location>
</feature>
<feature type="active site" description="Phosphocysteine intermediate; for EIIB activity" evidence="3">
    <location>
        <position position="26"/>
    </location>
</feature>
<feature type="active site" description="Tele-phosphohistidine intermediate; for EIIA activity" evidence="2">
    <location>
        <position position="532"/>
    </location>
</feature>
<feature type="sequence conflict" description="In Ref. 5; CAA59697." evidence="5" ref="5">
    <original>A</original>
    <variation>S</variation>
    <location>
        <position position="75"/>
    </location>
</feature>
<feature type="sequence conflict" description="In Ref. 2; BAA06652/BAA06256." evidence="5" ref="2">
    <original>L</original>
    <variation>F</variation>
    <location>
        <position position="288"/>
    </location>
</feature>
<feature type="sequence conflict" description="In Ref. 1; CAA84286." evidence="5" ref="1">
    <original>G</original>
    <variation>E</variation>
    <location>
        <position position="434"/>
    </location>
</feature>
<feature type="sequence conflict" description="In Ref. 2; BAA06652/BAA06256." evidence="5" ref="2">
    <original>A</original>
    <variation>S</variation>
    <location>
        <position position="436"/>
    </location>
</feature>
<feature type="sequence conflict" description="In Ref. 2; BAA06652/BAA06256." evidence="5" ref="2">
    <original>DG</original>
    <variation>HR</variation>
    <location>
        <begin position="449"/>
        <end position="450"/>
    </location>
</feature>
<feature type="sequence conflict" description="In Ref. 2; BAA06652/BAA06256." evidence="5" ref="2">
    <original>I</original>
    <variation>M</variation>
    <location>
        <position position="549"/>
    </location>
</feature>
<feature type="sequence conflict" description="In Ref. 2; BAA06652/BAA06256." evidence="5" ref="2">
    <original>G</original>
    <variation>S</variation>
    <location>
        <position position="552"/>
    </location>
</feature>
<proteinExistence type="inferred from homology"/>
<protein>
    <recommendedName>
        <fullName>PTS system beta-glucoside-specific EIIBCA component</fullName>
    </recommendedName>
    <alternativeName>
        <fullName>EIIBCA-Bgl</fullName>
        <shortName>EII-Bgl</shortName>
    </alternativeName>
    <domain>
        <recommendedName>
            <fullName>Beta-glucoside-specific phosphotransferase enzyme IIB component</fullName>
            <ecNumber>2.7.1.-</ecNumber>
        </recommendedName>
        <alternativeName>
            <fullName>PTS system beta-glucoside-specific EIIB component</fullName>
        </alternativeName>
    </domain>
    <domain>
        <recommendedName>
            <fullName>Beta-glucoside permease IIC component</fullName>
        </recommendedName>
        <alternativeName>
            <fullName>PTS system beta-glucoside-specific EIIC component</fullName>
        </alternativeName>
    </domain>
    <domain>
        <recommendedName>
            <fullName>Beta-glucoside-specific phosphotransferase enzyme IIA component</fullName>
        </recommendedName>
        <alternativeName>
            <fullName>PTS system beta-glucoside-specific EIIA component</fullName>
        </alternativeName>
    </domain>
</protein>
<name>PTV3B_BACSU</name>
<comment type="function">
    <text evidence="1">The phosphoenolpyruvate-dependent sugar phosphotransferase system (sugar PTS), a major carbohydrate active -transport system, catalyzes the phosphorylation of incoming sugar substrates concomitantly with their translocation across the cell membrane. This system is involved in beta-glucoside transport (By similarity).</text>
</comment>
<comment type="subcellular location">
    <subcellularLocation>
        <location evidence="4">Cell membrane</location>
        <topology evidence="4">Multi-pass membrane protein</topology>
    </subcellularLocation>
</comment>
<comment type="domain">
    <text>The EIIB domain is phosphorylated by phospho-EIIA on a cysteinyl or histidyl residue, depending on the transported sugar. Then, it transfers the phosphoryl group to the sugar substrate concomitantly with the sugar uptake processed by the EIIC domain.</text>
</comment>
<comment type="domain">
    <text>The EIIC domain forms the PTS system translocation channel and contains the specific substrate-binding site.</text>
</comment>
<comment type="domain">
    <text>The EIIA domain is phosphorylated by phospho-HPr on a histidyl residue. Then, it transfers the phosphoryl group to the EIIB domain.</text>
</comment>
<sequence length="609" mass="64478">MDYDKLSKDILQLVGGEENVQRVIHCMTRLRFNLHDNAKADRSQLEQLPGVMGTNISGEQFQIIIGNDVPKVYQAIVRHSNLSDEKSAGSSSQKKNVLSAVFDVISGVFTPILPAIAGAGMIKGLVALAVTFGWMAEKSQVHVILTAVGDGAFYFLPLLLAMSAARKFGSNPYVAAAIAAAILHPDLTALLGAGKPISFIGLPVTAATYSSTVIPILLSIWIASYVEKWIDRFTHASLKLIVVPTFTLLIVVPLTLITVGPLGAILGEYLSSGVNYLFDHAGLVAMILLAGTFSLIIMTGMHYAFVPIMINNIAQNGHDYLLPAMFLANMGQAGASFAVFLRSRNKKFKSLALTTSITALMGITEPAMYGVNMRLKKPFAAALIGGAAGGAFYGMTGVASYIVGGNAGLPSIPVFIGPTFIYAMIGLVIAFAAGTAAAYLLGFEDVPSDGSQQPAVHEGSREIIHSPIKGEVKALSEVKDGVFSAGVMGKGFAIEPEEGEVVSPVRGSVTTIFKTKHAIGITSDQGAEILIHIGLDTVKLEGQWFTAHIKEGDKVAPGDPLVSFDLEQIKAAGYDVITPVIVTNTDQYSFSPVKEIGKVQPKEALLALS</sequence>
<keyword id="KW-1003">Cell membrane</keyword>
<keyword id="KW-0418">Kinase</keyword>
<keyword id="KW-0472">Membrane</keyword>
<keyword id="KW-0598">Phosphotransferase system</keyword>
<keyword id="KW-1185">Reference proteome</keyword>
<keyword id="KW-0762">Sugar transport</keyword>
<keyword id="KW-0808">Transferase</keyword>
<keyword id="KW-0812">Transmembrane</keyword>
<keyword id="KW-1133">Transmembrane helix</keyword>
<keyword id="KW-0813">Transport</keyword>
<reference key="1">
    <citation type="journal article" date="1995" name="J. Bacteriol.">
        <title>New beta-glucoside (bgl) genes in Bacillus subtilis: the bglP gene product has both transport and regulatory functions similar to those of BglF, its Escherichia coli homolog.</title>
        <authorList>
            <person name="Le Coq D."/>
            <person name="Lindner C."/>
            <person name="Krueger S."/>
            <person name="Steinmetz M."/>
            <person name="Stuelke J."/>
        </authorList>
    </citation>
    <scope>NUCLEOTIDE SEQUENCE [GENOMIC DNA]</scope>
    <source>
        <strain>168 / Marburg / ATCC 6051 / DSM 10 / JCM 1465 / NBRC 13719 / NCIMB 3610 / NRRL NRS-744 / VKM B-501</strain>
    </source>
</reference>
<reference key="2">
    <citation type="journal article" date="1995" name="Microbiology">
        <title>Cloning and sequencing of a 29 kb region of the Bacillus subtilis genome containing the hut and wapA loci.</title>
        <authorList>
            <person name="Yoshida K."/>
            <person name="Sano H."/>
            <person name="Seki S."/>
            <person name="Oda M."/>
            <person name="Fujimura M."/>
            <person name="Fujita Y."/>
        </authorList>
    </citation>
    <scope>NUCLEOTIDE SEQUENCE [GENOMIC DNA]</scope>
    <source>
        <strain>168 / BGSC1A1</strain>
    </source>
</reference>
<reference key="3">
    <citation type="journal article" date="1997" name="Nature">
        <title>The complete genome sequence of the Gram-positive bacterium Bacillus subtilis.</title>
        <authorList>
            <person name="Kunst F."/>
            <person name="Ogasawara N."/>
            <person name="Moszer I."/>
            <person name="Albertini A.M."/>
            <person name="Alloni G."/>
            <person name="Azevedo V."/>
            <person name="Bertero M.G."/>
            <person name="Bessieres P."/>
            <person name="Bolotin A."/>
            <person name="Borchert S."/>
            <person name="Borriss R."/>
            <person name="Boursier L."/>
            <person name="Brans A."/>
            <person name="Braun M."/>
            <person name="Brignell S.C."/>
            <person name="Bron S."/>
            <person name="Brouillet S."/>
            <person name="Bruschi C.V."/>
            <person name="Caldwell B."/>
            <person name="Capuano V."/>
            <person name="Carter N.M."/>
            <person name="Choi S.-K."/>
            <person name="Codani J.-J."/>
            <person name="Connerton I.F."/>
            <person name="Cummings N.J."/>
            <person name="Daniel R.A."/>
            <person name="Denizot F."/>
            <person name="Devine K.M."/>
            <person name="Duesterhoeft A."/>
            <person name="Ehrlich S.D."/>
            <person name="Emmerson P.T."/>
            <person name="Entian K.-D."/>
            <person name="Errington J."/>
            <person name="Fabret C."/>
            <person name="Ferrari E."/>
            <person name="Foulger D."/>
            <person name="Fritz C."/>
            <person name="Fujita M."/>
            <person name="Fujita Y."/>
            <person name="Fuma S."/>
            <person name="Galizzi A."/>
            <person name="Galleron N."/>
            <person name="Ghim S.-Y."/>
            <person name="Glaser P."/>
            <person name="Goffeau A."/>
            <person name="Golightly E.J."/>
            <person name="Grandi G."/>
            <person name="Guiseppi G."/>
            <person name="Guy B.J."/>
            <person name="Haga K."/>
            <person name="Haiech J."/>
            <person name="Harwood C.R."/>
            <person name="Henaut A."/>
            <person name="Hilbert H."/>
            <person name="Holsappel S."/>
            <person name="Hosono S."/>
            <person name="Hullo M.-F."/>
            <person name="Itaya M."/>
            <person name="Jones L.-M."/>
            <person name="Joris B."/>
            <person name="Karamata D."/>
            <person name="Kasahara Y."/>
            <person name="Klaerr-Blanchard M."/>
            <person name="Klein C."/>
            <person name="Kobayashi Y."/>
            <person name="Koetter P."/>
            <person name="Koningstein G."/>
            <person name="Krogh S."/>
            <person name="Kumano M."/>
            <person name="Kurita K."/>
            <person name="Lapidus A."/>
            <person name="Lardinois S."/>
            <person name="Lauber J."/>
            <person name="Lazarevic V."/>
            <person name="Lee S.-M."/>
            <person name="Levine A."/>
            <person name="Liu H."/>
            <person name="Masuda S."/>
            <person name="Mauel C."/>
            <person name="Medigue C."/>
            <person name="Medina N."/>
            <person name="Mellado R.P."/>
            <person name="Mizuno M."/>
            <person name="Moestl D."/>
            <person name="Nakai S."/>
            <person name="Noback M."/>
            <person name="Noone D."/>
            <person name="O'Reilly M."/>
            <person name="Ogawa K."/>
            <person name="Ogiwara A."/>
            <person name="Oudega B."/>
            <person name="Park S.-H."/>
            <person name="Parro V."/>
            <person name="Pohl T.M."/>
            <person name="Portetelle D."/>
            <person name="Porwollik S."/>
            <person name="Prescott A.M."/>
            <person name="Presecan E."/>
            <person name="Pujic P."/>
            <person name="Purnelle B."/>
            <person name="Rapoport G."/>
            <person name="Rey M."/>
            <person name="Reynolds S."/>
            <person name="Rieger M."/>
            <person name="Rivolta C."/>
            <person name="Rocha E."/>
            <person name="Roche B."/>
            <person name="Rose M."/>
            <person name="Sadaie Y."/>
            <person name="Sato T."/>
            <person name="Scanlan E."/>
            <person name="Schleich S."/>
            <person name="Schroeter R."/>
            <person name="Scoffone F."/>
            <person name="Sekiguchi J."/>
            <person name="Sekowska A."/>
            <person name="Seror S.J."/>
            <person name="Serror P."/>
            <person name="Shin B.-S."/>
            <person name="Soldo B."/>
            <person name="Sorokin A."/>
            <person name="Tacconi E."/>
            <person name="Takagi T."/>
            <person name="Takahashi H."/>
            <person name="Takemaru K."/>
            <person name="Takeuchi M."/>
            <person name="Tamakoshi A."/>
            <person name="Tanaka T."/>
            <person name="Terpstra P."/>
            <person name="Tognoni A."/>
            <person name="Tosato V."/>
            <person name="Uchiyama S."/>
            <person name="Vandenbol M."/>
            <person name="Vannier F."/>
            <person name="Vassarotti A."/>
            <person name="Viari A."/>
            <person name="Wambutt R."/>
            <person name="Wedler E."/>
            <person name="Wedler H."/>
            <person name="Weitzenegger T."/>
            <person name="Winters P."/>
            <person name="Wipat A."/>
            <person name="Yamamoto H."/>
            <person name="Yamane K."/>
            <person name="Yasumoto K."/>
            <person name="Yata K."/>
            <person name="Yoshida K."/>
            <person name="Yoshikawa H.-F."/>
            <person name="Zumstein E."/>
            <person name="Yoshikawa H."/>
            <person name="Danchin A."/>
        </authorList>
    </citation>
    <scope>NUCLEOTIDE SEQUENCE [LARGE SCALE GENOMIC DNA]</scope>
    <source>
        <strain>168</strain>
    </source>
</reference>
<reference key="4">
    <citation type="journal article" date="2009" name="Microbiology">
        <title>From a consortium sequence to a unified sequence: the Bacillus subtilis 168 reference genome a decade later.</title>
        <authorList>
            <person name="Barbe V."/>
            <person name="Cruveiller S."/>
            <person name="Kunst F."/>
            <person name="Lenoble P."/>
            <person name="Meurice G."/>
            <person name="Sekowska A."/>
            <person name="Vallenet D."/>
            <person name="Wang T."/>
            <person name="Moszer I."/>
            <person name="Medigue C."/>
            <person name="Danchin A."/>
        </authorList>
    </citation>
    <scope>SEQUENCE REVISION TO 434</scope>
</reference>
<reference key="5">
    <citation type="journal article" date="1996" name="Mol. Gen. Genet.">
        <title>Suppression of the Bgl+ phenotype of a delta hns strain of Escherichia coli by a Bacillus subtilis antiterminator binding site.</title>
        <authorList>
            <person name="Beloin C."/>
            <person name="Hirschbein L."/>
            <person name="Le Hegarat F."/>
        </authorList>
    </citation>
    <scope>NUCLEOTIDE SEQUENCE [GENOMIC DNA] OF 1-182</scope>
    <source>
        <strain>168</strain>
    </source>
</reference>
<dbReference type="EC" id="2.7.1.-"/>
<dbReference type="EMBL" id="Z34526">
    <property type="protein sequence ID" value="CAA84286.1"/>
    <property type="molecule type" value="Genomic_DNA"/>
</dbReference>
<dbReference type="EMBL" id="D31856">
    <property type="protein sequence ID" value="BAA06652.1"/>
    <property type="molecule type" value="Genomic_DNA"/>
</dbReference>
<dbReference type="EMBL" id="D29985">
    <property type="protein sequence ID" value="BAA06256.1"/>
    <property type="molecule type" value="Genomic_DNA"/>
</dbReference>
<dbReference type="EMBL" id="AL009126">
    <property type="protein sequence ID" value="CAB15963.2"/>
    <property type="molecule type" value="Genomic_DNA"/>
</dbReference>
<dbReference type="EMBL" id="X85408">
    <property type="protein sequence ID" value="CAA59697.1"/>
    <property type="molecule type" value="Genomic_DNA"/>
</dbReference>
<dbReference type="PIR" id="I40406">
    <property type="entry name" value="I40406"/>
</dbReference>
<dbReference type="PIR" id="T47097">
    <property type="entry name" value="T47097"/>
</dbReference>
<dbReference type="RefSeq" id="NP_391806.2">
    <property type="nucleotide sequence ID" value="NC_000964.3"/>
</dbReference>
<dbReference type="RefSeq" id="WP_003242943.1">
    <property type="nucleotide sequence ID" value="NZ_OZ025638.1"/>
</dbReference>
<dbReference type="SMR" id="P40739"/>
<dbReference type="FunCoup" id="P40739">
    <property type="interactions" value="49"/>
</dbReference>
<dbReference type="STRING" id="224308.BSU39270"/>
<dbReference type="TCDB" id="4.A.1.2.11">
    <property type="family name" value="the pts glucose-glucoside (glc) family"/>
</dbReference>
<dbReference type="jPOST" id="P40739"/>
<dbReference type="PaxDb" id="224308-BSU39270"/>
<dbReference type="EnsemblBacteria" id="CAB15963">
    <property type="protein sequence ID" value="CAB15963"/>
    <property type="gene ID" value="BSU_39270"/>
</dbReference>
<dbReference type="GeneID" id="937518"/>
<dbReference type="KEGG" id="bsu:BSU39270"/>
<dbReference type="PATRIC" id="fig|224308.179.peg.4251"/>
<dbReference type="eggNOG" id="COG1263">
    <property type="taxonomic scope" value="Bacteria"/>
</dbReference>
<dbReference type="eggNOG" id="COG1264">
    <property type="taxonomic scope" value="Bacteria"/>
</dbReference>
<dbReference type="eggNOG" id="COG2190">
    <property type="taxonomic scope" value="Bacteria"/>
</dbReference>
<dbReference type="InParanoid" id="P40739"/>
<dbReference type="OrthoDB" id="9769191at2"/>
<dbReference type="PhylomeDB" id="P40739"/>
<dbReference type="BioCyc" id="BSUB:BSU39270-MONOMER"/>
<dbReference type="Proteomes" id="UP000001570">
    <property type="component" value="Chromosome"/>
</dbReference>
<dbReference type="GO" id="GO:0005886">
    <property type="term" value="C:plasma membrane"/>
    <property type="evidence" value="ECO:0000318"/>
    <property type="project" value="GO_Central"/>
</dbReference>
<dbReference type="GO" id="GO:0016301">
    <property type="term" value="F:kinase activity"/>
    <property type="evidence" value="ECO:0007669"/>
    <property type="project" value="UniProtKB-KW"/>
</dbReference>
<dbReference type="GO" id="GO:0008982">
    <property type="term" value="F:protein-N(PI)-phosphohistidine-sugar phosphotransferase activity"/>
    <property type="evidence" value="ECO:0007669"/>
    <property type="project" value="InterPro"/>
</dbReference>
<dbReference type="GO" id="GO:0090589">
    <property type="term" value="F:protein-phosphocysteine-trehalose phosphotransferase system transporter activity"/>
    <property type="evidence" value="ECO:0000318"/>
    <property type="project" value="GO_Central"/>
</dbReference>
<dbReference type="GO" id="GO:0009401">
    <property type="term" value="P:phosphoenolpyruvate-dependent sugar phosphotransferase system"/>
    <property type="evidence" value="ECO:0000318"/>
    <property type="project" value="GO_Central"/>
</dbReference>
<dbReference type="GO" id="GO:0015771">
    <property type="term" value="P:trehalose transport"/>
    <property type="evidence" value="ECO:0000318"/>
    <property type="project" value="GO_Central"/>
</dbReference>
<dbReference type="CDD" id="cd00210">
    <property type="entry name" value="PTS_IIA_glc"/>
    <property type="match status" value="1"/>
</dbReference>
<dbReference type="CDD" id="cd00212">
    <property type="entry name" value="PTS_IIB_glc"/>
    <property type="match status" value="1"/>
</dbReference>
<dbReference type="FunFam" id="2.70.70.10:FF:000001">
    <property type="entry name" value="PTS system glucose-specific IIA component"/>
    <property type="match status" value="1"/>
</dbReference>
<dbReference type="FunFam" id="3.30.1360.60:FF:000001">
    <property type="entry name" value="PTS system glucose-specific IIBC component PtsG"/>
    <property type="match status" value="1"/>
</dbReference>
<dbReference type="Gene3D" id="2.70.70.10">
    <property type="entry name" value="Glucose Permease (Domain IIA)"/>
    <property type="match status" value="1"/>
</dbReference>
<dbReference type="Gene3D" id="3.30.1360.60">
    <property type="entry name" value="Glucose permease domain IIB"/>
    <property type="match status" value="1"/>
</dbReference>
<dbReference type="InterPro" id="IPR011055">
    <property type="entry name" value="Dup_hybrid_motif"/>
</dbReference>
<dbReference type="InterPro" id="IPR036878">
    <property type="entry name" value="Glu_permease_IIB"/>
</dbReference>
<dbReference type="InterPro" id="IPR018113">
    <property type="entry name" value="PTrfase_EIIB_Cys"/>
</dbReference>
<dbReference type="InterPro" id="IPR001127">
    <property type="entry name" value="PTS_EIIA_1_perm"/>
</dbReference>
<dbReference type="InterPro" id="IPR003352">
    <property type="entry name" value="PTS_EIIC"/>
</dbReference>
<dbReference type="InterPro" id="IPR013013">
    <property type="entry name" value="PTS_EIIC_1"/>
</dbReference>
<dbReference type="InterPro" id="IPR011297">
    <property type="entry name" value="PTS_IIABC_b_glu"/>
</dbReference>
<dbReference type="InterPro" id="IPR001996">
    <property type="entry name" value="PTS_IIB_1"/>
</dbReference>
<dbReference type="InterPro" id="IPR050558">
    <property type="entry name" value="PTS_Sugar-Specific_Components"/>
</dbReference>
<dbReference type="NCBIfam" id="TIGR00830">
    <property type="entry name" value="PTBA"/>
    <property type="match status" value="1"/>
</dbReference>
<dbReference type="NCBIfam" id="TIGR01995">
    <property type="entry name" value="PTS-II-ABC-beta"/>
    <property type="match status" value="1"/>
</dbReference>
<dbReference type="PANTHER" id="PTHR30175">
    <property type="entry name" value="PHOSPHOTRANSFERASE SYSTEM TRANSPORT PROTEIN"/>
    <property type="match status" value="1"/>
</dbReference>
<dbReference type="PANTHER" id="PTHR30175:SF1">
    <property type="entry name" value="PTS SYSTEM ARBUTIN-, CELLOBIOSE-, AND SALICIN-SPECIFIC EIIBC COMPONENT-RELATED"/>
    <property type="match status" value="1"/>
</dbReference>
<dbReference type="Pfam" id="PF00358">
    <property type="entry name" value="PTS_EIIA_1"/>
    <property type="match status" value="1"/>
</dbReference>
<dbReference type="Pfam" id="PF00367">
    <property type="entry name" value="PTS_EIIB"/>
    <property type="match status" value="1"/>
</dbReference>
<dbReference type="Pfam" id="PF02378">
    <property type="entry name" value="PTS_EIIC"/>
    <property type="match status" value="1"/>
</dbReference>
<dbReference type="SUPFAM" id="SSF51261">
    <property type="entry name" value="Duplicated hybrid motif"/>
    <property type="match status" value="1"/>
</dbReference>
<dbReference type="SUPFAM" id="SSF55604">
    <property type="entry name" value="Glucose permease domain IIB"/>
    <property type="match status" value="1"/>
</dbReference>
<dbReference type="PROSITE" id="PS51093">
    <property type="entry name" value="PTS_EIIA_TYPE_1"/>
    <property type="match status" value="1"/>
</dbReference>
<dbReference type="PROSITE" id="PS00371">
    <property type="entry name" value="PTS_EIIA_TYPE_1_HIS"/>
    <property type="match status" value="1"/>
</dbReference>
<dbReference type="PROSITE" id="PS51098">
    <property type="entry name" value="PTS_EIIB_TYPE_1"/>
    <property type="match status" value="1"/>
</dbReference>
<dbReference type="PROSITE" id="PS01035">
    <property type="entry name" value="PTS_EIIB_TYPE_1_CYS"/>
    <property type="match status" value="1"/>
</dbReference>
<dbReference type="PROSITE" id="PS51103">
    <property type="entry name" value="PTS_EIIC_TYPE_1"/>
    <property type="match status" value="1"/>
</dbReference>
<evidence type="ECO:0000250" key="1"/>
<evidence type="ECO:0000255" key="2">
    <source>
        <dbReference type="PROSITE-ProRule" id="PRU00416"/>
    </source>
</evidence>
<evidence type="ECO:0000255" key="3">
    <source>
        <dbReference type="PROSITE-ProRule" id="PRU00421"/>
    </source>
</evidence>
<evidence type="ECO:0000255" key="4">
    <source>
        <dbReference type="PROSITE-ProRule" id="PRU00426"/>
    </source>
</evidence>
<evidence type="ECO:0000305" key="5"/>
<organism>
    <name type="scientific">Bacillus subtilis (strain 168)</name>
    <dbReference type="NCBI Taxonomy" id="224308"/>
    <lineage>
        <taxon>Bacteria</taxon>
        <taxon>Bacillati</taxon>
        <taxon>Bacillota</taxon>
        <taxon>Bacilli</taxon>
        <taxon>Bacillales</taxon>
        <taxon>Bacillaceae</taxon>
        <taxon>Bacillus</taxon>
    </lineage>
</organism>